<dbReference type="EMBL" id="EU414198">
    <property type="protein sequence ID" value="ABZ82008.1"/>
    <property type="molecule type" value="Genomic_DNA"/>
</dbReference>
<dbReference type="GlyCosmos" id="B1A0U4">
    <property type="glycosylation" value="2 sites, No reported glycans"/>
</dbReference>
<dbReference type="GO" id="GO:0005886">
    <property type="term" value="C:plasma membrane"/>
    <property type="evidence" value="ECO:0007669"/>
    <property type="project" value="UniProtKB-SubCell"/>
</dbReference>
<dbReference type="GO" id="GO:0015112">
    <property type="term" value="F:nitrate transmembrane transporter activity"/>
    <property type="evidence" value="ECO:0007669"/>
    <property type="project" value="InterPro"/>
</dbReference>
<dbReference type="Gene3D" id="1.20.1250.20">
    <property type="entry name" value="MFS general substrate transporter like domains"/>
    <property type="match status" value="1"/>
</dbReference>
<dbReference type="InterPro" id="IPR011701">
    <property type="entry name" value="MFS"/>
</dbReference>
<dbReference type="InterPro" id="IPR036259">
    <property type="entry name" value="MFS_trans_sf"/>
</dbReference>
<dbReference type="InterPro" id="IPR044772">
    <property type="entry name" value="NO3_transporter"/>
</dbReference>
<dbReference type="PANTHER" id="PTHR23515">
    <property type="entry name" value="HIGH-AFFINITY NITRATE TRANSPORTER 2.3"/>
    <property type="match status" value="1"/>
</dbReference>
<dbReference type="Pfam" id="PF07690">
    <property type="entry name" value="MFS_1"/>
    <property type="match status" value="1"/>
</dbReference>
<dbReference type="SUPFAM" id="SSF103473">
    <property type="entry name" value="MFS general substrate transporter"/>
    <property type="match status" value="1"/>
</dbReference>
<organism>
    <name type="scientific">Elsinoe fawcettii</name>
    <name type="common">Citrus scab fungus</name>
    <name type="synonym">Sphaceloma fawcettii</name>
    <dbReference type="NCBI Taxonomy" id="40997"/>
    <lineage>
        <taxon>Eukaryota</taxon>
        <taxon>Fungi</taxon>
        <taxon>Dikarya</taxon>
        <taxon>Ascomycota</taxon>
        <taxon>Pezizomycotina</taxon>
        <taxon>Dothideomycetes</taxon>
        <taxon>Dothideomycetidae</taxon>
        <taxon>Myriangiales</taxon>
        <taxon>Elsinoaceae</taxon>
        <taxon>Elsinoe</taxon>
    </lineage>
</organism>
<name>ECT1_ELSFA</name>
<gene>
    <name evidence="5" type="primary">ECT1</name>
</gene>
<evidence type="ECO:0000255" key="1"/>
<evidence type="ECO:0000255" key="2">
    <source>
        <dbReference type="PROSITE-ProRule" id="PRU00498"/>
    </source>
</evidence>
<evidence type="ECO:0000256" key="3">
    <source>
        <dbReference type="SAM" id="MobiDB-lite"/>
    </source>
</evidence>
<evidence type="ECO:0000269" key="4">
    <source>
    </source>
</evidence>
<evidence type="ECO:0000303" key="5">
    <source>
    </source>
</evidence>
<evidence type="ECO:0000303" key="6">
    <source>
    </source>
</evidence>
<evidence type="ECO:0000305" key="7"/>
<comment type="function">
    <text evidence="4 6">Major facilitator-type transporter; part of the gene cluster that mediates the biosynthesis of elsinochromes, pigments consisting of at least four interconvertible tautomers (A, B, C and D) that have a core phenolic quinone to which various side chains are attached and which play an important role in fungal pathogenesis (PubMed:18957608). Once elsinochrome is synthesized, it must be exported outside the fungal cells, which is probably accomplished by the ECT1 transporter, to avoid toxicity (PubMed:21199563).</text>
</comment>
<comment type="subcellular location">
    <subcellularLocation>
        <location evidence="7">Cell membrane</location>
        <topology evidence="1">Multi-pass membrane protein</topology>
    </subcellularLocation>
</comment>
<comment type="induction">
    <text evidence="4">Expression is induced by the presence of the cluster-specific polyketide synthase PKS1 (PubMed:18957608). Expression is up-regulated in the presence of large amounts of glucose, during nitrogen starvation or at alkaline pH, conditions highly conducive to elsinochrome accumulation (PubMed:18957608).</text>
</comment>
<comment type="similarity">
    <text evidence="7">Belongs to the major facilitator superfamily. Nitrate/nitrite porter (TC 2.A.1.8) family.</text>
</comment>
<keyword id="KW-1003">Cell membrane</keyword>
<keyword id="KW-0325">Glycoprotein</keyword>
<keyword id="KW-0472">Membrane</keyword>
<keyword id="KW-0812">Transmembrane</keyword>
<keyword id="KW-1133">Transmembrane helix</keyword>
<keyword id="KW-0813">Transport</keyword>
<reference key="1">
    <citation type="journal article" date="2008" name="Microbiology">
        <title>Determination of a transcriptional regulator-like gene involved in biosynthesis of elsinochrome phytotoxin by the citrus scab fungus, Elsinoe fawcettii.</title>
        <authorList>
            <person name="Chung K.R."/>
            <person name="Liao H.L."/>
        </authorList>
    </citation>
    <scope>NUCLEOTIDE SEQUENCE [GENOMIC DNA]</scope>
    <scope>IDENTIFICATION</scope>
    <scope>FUNCTION</scope>
    <scope>INDUCTION</scope>
</reference>
<reference key="2">
    <citation type="journal article" date="2011" name="Mol. Plant Pathol.">
        <title>Elsinoe fawcettii and Elsinoe australis: the fungal pathogens causing citrus scab.</title>
        <authorList>
            <person name="Chung K.R."/>
        </authorList>
    </citation>
    <scope>REVIEW</scope>
</reference>
<protein>
    <recommendedName>
        <fullName evidence="5">Elsinochrome transporter 1</fullName>
    </recommendedName>
    <alternativeName>
        <fullName evidence="5">Elsinochromes biosynthesis cluster protein ECT1</fullName>
    </alternativeName>
</protein>
<feature type="chain" id="PRO_0000445821" description="Elsinochrome transporter 1">
    <location>
        <begin position="1"/>
        <end position="505"/>
    </location>
</feature>
<feature type="transmembrane region" description="Helical" evidence="1">
    <location>
        <begin position="35"/>
        <end position="55"/>
    </location>
</feature>
<feature type="transmembrane region" description="Helical" evidence="1">
    <location>
        <begin position="313"/>
        <end position="333"/>
    </location>
</feature>
<feature type="transmembrane region" description="Helical" evidence="1">
    <location>
        <begin position="348"/>
        <end position="368"/>
    </location>
</feature>
<feature type="transmembrane region" description="Helical" evidence="1">
    <location>
        <begin position="391"/>
        <end position="411"/>
    </location>
</feature>
<feature type="transmembrane region" description="Helical" evidence="1">
    <location>
        <begin position="417"/>
        <end position="437"/>
    </location>
</feature>
<feature type="transmembrane region" description="Helical" evidence="1">
    <location>
        <begin position="449"/>
        <end position="469"/>
    </location>
</feature>
<feature type="transmembrane region" description="Helical" evidence="1">
    <location>
        <begin position="479"/>
        <end position="499"/>
    </location>
</feature>
<feature type="region of interest" description="Disordered" evidence="3">
    <location>
        <begin position="1"/>
        <end position="25"/>
    </location>
</feature>
<feature type="region of interest" description="Disordered" evidence="3">
    <location>
        <begin position="221"/>
        <end position="295"/>
    </location>
</feature>
<feature type="compositionally biased region" description="Gly residues" evidence="3">
    <location>
        <begin position="1"/>
        <end position="10"/>
    </location>
</feature>
<feature type="compositionally biased region" description="Low complexity" evidence="3">
    <location>
        <begin position="255"/>
        <end position="267"/>
    </location>
</feature>
<feature type="glycosylation site" description="N-linked (GlcNAc...) asparagine" evidence="2">
    <location>
        <position position="64"/>
    </location>
</feature>
<feature type="glycosylation site" description="N-linked (GlcNAc...) asparagine" evidence="2">
    <location>
        <position position="80"/>
    </location>
</feature>
<accession>B1A0U4</accession>
<sequence length="505" mass="54058">MALSGLGSGPEGNPNNHQGKAIPTLNPSHGQGPSFLFSWVSFLVPFWSWYPFSPLPLKGIPGENSSSPNGLKNFHGIGLNGTERGMGHFHPISGNRLGLRLTLVAGWFLEPFPTFLAVLIRTQGDSTPSRSFVAFFVGTLGLGQEGITGSFNRKIAGPATIDPQDWAMEEGVLTNFLWPPFTTFFRTTKGFPVQWHGEGSFVVPGIFSLPQPLPWWLLLPDTPTGAGKPPESRQHQPSHSMNGAIVDIPGGLTQTPSSPDRSSSTNSIADEEKKLDYKPTSPTSDTEKGESLPLTASQSEIIASPTFSEMIRVIFSGPTLVLGACYFCTFGAELSINSVLGTFYQRQLGLGLQNAGNLAAIFGLLNIVMRPLGGMASDLLYRKTGSVWSKKALLHTYCVMTGVFCIAIGLARSRSQATLVGLVSGGLAFFLEGANGLTYSHVHPYANGVVSGFTGACGNLGGIVFAIVFRYNSLDYSKVFWIIGAIIIGLQVATCWIKPVPKSVI</sequence>
<proteinExistence type="evidence at transcript level"/>